<comment type="function">
    <text evidence="1">DNA ligase that catalyzes the formation of phosphodiester linkages between 5'-phosphoryl and 3'-hydroxyl groups in double-stranded DNA using NAD as a coenzyme and as the energy source for the reaction. It is essential for DNA replication and repair of damaged DNA.</text>
</comment>
<comment type="catalytic activity">
    <reaction evidence="1">
        <text>NAD(+) + (deoxyribonucleotide)n-3'-hydroxyl + 5'-phospho-(deoxyribonucleotide)m = (deoxyribonucleotide)n+m + AMP + beta-nicotinamide D-nucleotide.</text>
        <dbReference type="EC" id="6.5.1.2"/>
    </reaction>
</comment>
<comment type="cofactor">
    <cofactor evidence="1">
        <name>Mg(2+)</name>
        <dbReference type="ChEBI" id="CHEBI:18420"/>
    </cofactor>
    <cofactor evidence="1">
        <name>Mn(2+)</name>
        <dbReference type="ChEBI" id="CHEBI:29035"/>
    </cofactor>
</comment>
<comment type="similarity">
    <text evidence="1">Belongs to the NAD-dependent DNA ligase family. LigA subfamily.</text>
</comment>
<name>DNLJ_STRP8</name>
<dbReference type="EC" id="6.5.1.2" evidence="1"/>
<dbReference type="EMBL" id="AE009949">
    <property type="protein sequence ID" value="AAL97474.1"/>
    <property type="molecule type" value="Genomic_DNA"/>
</dbReference>
<dbReference type="RefSeq" id="WP_011017608.1">
    <property type="nucleotide sequence ID" value="NC_003485.1"/>
</dbReference>
<dbReference type="SMR" id="Q8P1L1"/>
<dbReference type="KEGG" id="spm:spyM18_0810"/>
<dbReference type="HOGENOM" id="CLU_007764_2_1_9"/>
<dbReference type="GO" id="GO:0005829">
    <property type="term" value="C:cytosol"/>
    <property type="evidence" value="ECO:0007669"/>
    <property type="project" value="TreeGrafter"/>
</dbReference>
<dbReference type="GO" id="GO:0003677">
    <property type="term" value="F:DNA binding"/>
    <property type="evidence" value="ECO:0007669"/>
    <property type="project" value="InterPro"/>
</dbReference>
<dbReference type="GO" id="GO:0003911">
    <property type="term" value="F:DNA ligase (NAD+) activity"/>
    <property type="evidence" value="ECO:0007669"/>
    <property type="project" value="UniProtKB-UniRule"/>
</dbReference>
<dbReference type="GO" id="GO:0046872">
    <property type="term" value="F:metal ion binding"/>
    <property type="evidence" value="ECO:0007669"/>
    <property type="project" value="UniProtKB-KW"/>
</dbReference>
<dbReference type="GO" id="GO:0006281">
    <property type="term" value="P:DNA repair"/>
    <property type="evidence" value="ECO:0007669"/>
    <property type="project" value="UniProtKB-KW"/>
</dbReference>
<dbReference type="GO" id="GO:0006260">
    <property type="term" value="P:DNA replication"/>
    <property type="evidence" value="ECO:0007669"/>
    <property type="project" value="UniProtKB-KW"/>
</dbReference>
<dbReference type="CDD" id="cd17748">
    <property type="entry name" value="BRCT_DNA_ligase_like"/>
    <property type="match status" value="1"/>
</dbReference>
<dbReference type="CDD" id="cd00114">
    <property type="entry name" value="LIGANc"/>
    <property type="match status" value="1"/>
</dbReference>
<dbReference type="FunFam" id="1.10.150.20:FF:000007">
    <property type="entry name" value="DNA ligase"/>
    <property type="match status" value="1"/>
</dbReference>
<dbReference type="FunFam" id="1.10.287.610:FF:000002">
    <property type="entry name" value="DNA ligase"/>
    <property type="match status" value="1"/>
</dbReference>
<dbReference type="FunFam" id="2.40.50.140:FF:000012">
    <property type="entry name" value="DNA ligase"/>
    <property type="match status" value="1"/>
</dbReference>
<dbReference type="FunFam" id="3.30.470.30:FF:000001">
    <property type="entry name" value="DNA ligase"/>
    <property type="match status" value="1"/>
</dbReference>
<dbReference type="Gene3D" id="6.20.10.30">
    <property type="match status" value="1"/>
</dbReference>
<dbReference type="Gene3D" id="1.10.150.20">
    <property type="entry name" value="5' to 3' exonuclease, C-terminal subdomain"/>
    <property type="match status" value="2"/>
</dbReference>
<dbReference type="Gene3D" id="3.40.50.10190">
    <property type="entry name" value="BRCT domain"/>
    <property type="match status" value="1"/>
</dbReference>
<dbReference type="Gene3D" id="3.30.470.30">
    <property type="entry name" value="DNA ligase/mRNA capping enzyme"/>
    <property type="match status" value="1"/>
</dbReference>
<dbReference type="Gene3D" id="1.10.287.610">
    <property type="entry name" value="Helix hairpin bin"/>
    <property type="match status" value="1"/>
</dbReference>
<dbReference type="Gene3D" id="2.40.50.140">
    <property type="entry name" value="Nucleic acid-binding proteins"/>
    <property type="match status" value="1"/>
</dbReference>
<dbReference type="HAMAP" id="MF_01588">
    <property type="entry name" value="DNA_ligase_A"/>
    <property type="match status" value="1"/>
</dbReference>
<dbReference type="InterPro" id="IPR001357">
    <property type="entry name" value="BRCT_dom"/>
</dbReference>
<dbReference type="InterPro" id="IPR036420">
    <property type="entry name" value="BRCT_dom_sf"/>
</dbReference>
<dbReference type="InterPro" id="IPR041663">
    <property type="entry name" value="DisA/LigA_HHH"/>
</dbReference>
<dbReference type="InterPro" id="IPR001679">
    <property type="entry name" value="DNA_ligase"/>
</dbReference>
<dbReference type="InterPro" id="IPR018239">
    <property type="entry name" value="DNA_ligase_AS"/>
</dbReference>
<dbReference type="InterPro" id="IPR033136">
    <property type="entry name" value="DNA_ligase_CS"/>
</dbReference>
<dbReference type="InterPro" id="IPR013839">
    <property type="entry name" value="DNAligase_adenylation"/>
</dbReference>
<dbReference type="InterPro" id="IPR013840">
    <property type="entry name" value="DNAligase_N"/>
</dbReference>
<dbReference type="InterPro" id="IPR003583">
    <property type="entry name" value="Hlx-hairpin-Hlx_DNA-bd_motif"/>
</dbReference>
<dbReference type="InterPro" id="IPR012340">
    <property type="entry name" value="NA-bd_OB-fold"/>
</dbReference>
<dbReference type="InterPro" id="IPR004150">
    <property type="entry name" value="NAD_DNA_ligase_OB"/>
</dbReference>
<dbReference type="InterPro" id="IPR010994">
    <property type="entry name" value="RuvA_2-like"/>
</dbReference>
<dbReference type="InterPro" id="IPR004149">
    <property type="entry name" value="Znf_DNAligase_C4"/>
</dbReference>
<dbReference type="NCBIfam" id="TIGR00575">
    <property type="entry name" value="dnlj"/>
    <property type="match status" value="1"/>
</dbReference>
<dbReference type="NCBIfam" id="NF005932">
    <property type="entry name" value="PRK07956.1"/>
    <property type="match status" value="1"/>
</dbReference>
<dbReference type="PANTHER" id="PTHR23389">
    <property type="entry name" value="CHROMOSOME TRANSMISSION FIDELITY FACTOR 18"/>
    <property type="match status" value="1"/>
</dbReference>
<dbReference type="PANTHER" id="PTHR23389:SF9">
    <property type="entry name" value="DNA LIGASE"/>
    <property type="match status" value="1"/>
</dbReference>
<dbReference type="Pfam" id="PF00533">
    <property type="entry name" value="BRCT"/>
    <property type="match status" value="1"/>
</dbReference>
<dbReference type="Pfam" id="PF01653">
    <property type="entry name" value="DNA_ligase_aden"/>
    <property type="match status" value="1"/>
</dbReference>
<dbReference type="Pfam" id="PF03120">
    <property type="entry name" value="DNA_ligase_OB"/>
    <property type="match status" value="1"/>
</dbReference>
<dbReference type="Pfam" id="PF03119">
    <property type="entry name" value="DNA_ligase_ZBD"/>
    <property type="match status" value="1"/>
</dbReference>
<dbReference type="Pfam" id="PF12826">
    <property type="entry name" value="HHH_2"/>
    <property type="match status" value="1"/>
</dbReference>
<dbReference type="Pfam" id="PF14520">
    <property type="entry name" value="HHH_5"/>
    <property type="match status" value="1"/>
</dbReference>
<dbReference type="PIRSF" id="PIRSF001604">
    <property type="entry name" value="LigA"/>
    <property type="match status" value="1"/>
</dbReference>
<dbReference type="SMART" id="SM00292">
    <property type="entry name" value="BRCT"/>
    <property type="match status" value="1"/>
</dbReference>
<dbReference type="SMART" id="SM00278">
    <property type="entry name" value="HhH1"/>
    <property type="match status" value="3"/>
</dbReference>
<dbReference type="SMART" id="SM00532">
    <property type="entry name" value="LIGANc"/>
    <property type="match status" value="1"/>
</dbReference>
<dbReference type="SUPFAM" id="SSF52113">
    <property type="entry name" value="BRCT domain"/>
    <property type="match status" value="1"/>
</dbReference>
<dbReference type="SUPFAM" id="SSF56091">
    <property type="entry name" value="DNA ligase/mRNA capping enzyme, catalytic domain"/>
    <property type="match status" value="1"/>
</dbReference>
<dbReference type="SUPFAM" id="SSF50249">
    <property type="entry name" value="Nucleic acid-binding proteins"/>
    <property type="match status" value="1"/>
</dbReference>
<dbReference type="SUPFAM" id="SSF47781">
    <property type="entry name" value="RuvA domain 2-like"/>
    <property type="match status" value="1"/>
</dbReference>
<dbReference type="PROSITE" id="PS50172">
    <property type="entry name" value="BRCT"/>
    <property type="match status" value="1"/>
</dbReference>
<dbReference type="PROSITE" id="PS01055">
    <property type="entry name" value="DNA_LIGASE_N1"/>
    <property type="match status" value="1"/>
</dbReference>
<dbReference type="PROSITE" id="PS01056">
    <property type="entry name" value="DNA_LIGASE_N2"/>
    <property type="match status" value="1"/>
</dbReference>
<protein>
    <recommendedName>
        <fullName evidence="1">DNA ligase</fullName>
        <ecNumber evidence="1">6.5.1.2</ecNumber>
    </recommendedName>
    <alternativeName>
        <fullName evidence="1">Polydeoxyribonucleotide synthase [NAD(+)]</fullName>
    </alternativeName>
</protein>
<proteinExistence type="inferred from homology"/>
<evidence type="ECO:0000255" key="1">
    <source>
        <dbReference type="HAMAP-Rule" id="MF_01588"/>
    </source>
</evidence>
<reference key="1">
    <citation type="journal article" date="2002" name="Proc. Natl. Acad. Sci. U.S.A.">
        <title>Genome sequence and comparative microarray analysis of serotype M18 group A Streptococcus strains associated with acute rheumatic fever outbreaks.</title>
        <authorList>
            <person name="Smoot J.C."/>
            <person name="Barbian K.D."/>
            <person name="Van Gompel J.J."/>
            <person name="Smoot L.M."/>
            <person name="Chaussee M.S."/>
            <person name="Sylva G.L."/>
            <person name="Sturdevant D.E."/>
            <person name="Ricklefs S.M."/>
            <person name="Porcella S.F."/>
            <person name="Parkins L.D."/>
            <person name="Beres S.B."/>
            <person name="Campbell D.S."/>
            <person name="Smith T.M."/>
            <person name="Zhang Q."/>
            <person name="Kapur V."/>
            <person name="Daly J.A."/>
            <person name="Veasy L.G."/>
            <person name="Musser J.M."/>
        </authorList>
    </citation>
    <scope>NUCLEOTIDE SEQUENCE [LARGE SCALE GENOMIC DNA]</scope>
    <source>
        <strain>MGAS8232</strain>
    </source>
</reference>
<organism>
    <name type="scientific">Streptococcus pyogenes serotype M18 (strain MGAS8232)</name>
    <dbReference type="NCBI Taxonomy" id="186103"/>
    <lineage>
        <taxon>Bacteria</taxon>
        <taxon>Bacillati</taxon>
        <taxon>Bacillota</taxon>
        <taxon>Bacilli</taxon>
        <taxon>Lactobacillales</taxon>
        <taxon>Streptococcaceae</taxon>
        <taxon>Streptococcus</taxon>
    </lineage>
</organism>
<keyword id="KW-0227">DNA damage</keyword>
<keyword id="KW-0234">DNA repair</keyword>
<keyword id="KW-0235">DNA replication</keyword>
<keyword id="KW-0436">Ligase</keyword>
<keyword id="KW-0460">Magnesium</keyword>
<keyword id="KW-0464">Manganese</keyword>
<keyword id="KW-0479">Metal-binding</keyword>
<keyword id="KW-0520">NAD</keyword>
<keyword id="KW-0862">Zinc</keyword>
<gene>
    <name evidence="1" type="primary">ligA</name>
    <name type="ordered locus">spyM18_0810</name>
</gene>
<feature type="chain" id="PRO_0000313460" description="DNA ligase">
    <location>
        <begin position="1"/>
        <end position="652"/>
    </location>
</feature>
<feature type="domain" description="BRCT" evidence="1">
    <location>
        <begin position="577"/>
        <end position="652"/>
    </location>
</feature>
<feature type="active site" description="N6-AMP-lysine intermediate" evidence="1">
    <location>
        <position position="109"/>
    </location>
</feature>
<feature type="binding site" evidence="1">
    <location>
        <begin position="29"/>
        <end position="33"/>
    </location>
    <ligand>
        <name>NAD(+)</name>
        <dbReference type="ChEBI" id="CHEBI:57540"/>
    </ligand>
</feature>
<feature type="binding site" evidence="1">
    <location>
        <begin position="78"/>
        <end position="79"/>
    </location>
    <ligand>
        <name>NAD(+)</name>
        <dbReference type="ChEBI" id="CHEBI:57540"/>
    </ligand>
</feature>
<feature type="binding site" evidence="1">
    <location>
        <position position="107"/>
    </location>
    <ligand>
        <name>NAD(+)</name>
        <dbReference type="ChEBI" id="CHEBI:57540"/>
    </ligand>
</feature>
<feature type="binding site" evidence="1">
    <location>
        <position position="130"/>
    </location>
    <ligand>
        <name>NAD(+)</name>
        <dbReference type="ChEBI" id="CHEBI:57540"/>
    </ligand>
</feature>
<feature type="binding site" evidence="1">
    <location>
        <position position="164"/>
    </location>
    <ligand>
        <name>NAD(+)</name>
        <dbReference type="ChEBI" id="CHEBI:57540"/>
    </ligand>
</feature>
<feature type="binding site" evidence="1">
    <location>
        <position position="278"/>
    </location>
    <ligand>
        <name>NAD(+)</name>
        <dbReference type="ChEBI" id="CHEBI:57540"/>
    </ligand>
</feature>
<feature type="binding site" evidence="1">
    <location>
        <position position="302"/>
    </location>
    <ligand>
        <name>NAD(+)</name>
        <dbReference type="ChEBI" id="CHEBI:57540"/>
    </ligand>
</feature>
<feature type="binding site" evidence="1">
    <location>
        <position position="395"/>
    </location>
    <ligand>
        <name>Zn(2+)</name>
        <dbReference type="ChEBI" id="CHEBI:29105"/>
    </ligand>
</feature>
<feature type="binding site" evidence="1">
    <location>
        <position position="398"/>
    </location>
    <ligand>
        <name>Zn(2+)</name>
        <dbReference type="ChEBI" id="CHEBI:29105"/>
    </ligand>
</feature>
<feature type="binding site" evidence="1">
    <location>
        <position position="413"/>
    </location>
    <ligand>
        <name>Zn(2+)</name>
        <dbReference type="ChEBI" id="CHEBI:29105"/>
    </ligand>
</feature>
<feature type="binding site" evidence="1">
    <location>
        <position position="418"/>
    </location>
    <ligand>
        <name>Zn(2+)</name>
        <dbReference type="ChEBI" id="CHEBI:29105"/>
    </ligand>
</feature>
<sequence>MKKRIKELTDLLNRYRYDYYTKDAPSVSDSDYDKLYRELVTLEQSYPEYVLQDSPTQQVGGTILKGFEKYRHQYPLFSLQDAFSREELDAFDKRVKAEFPNATYLAELKIDGLSISLSYENGFLQVGATRGDGNIGENITENIKKIKDIPHQLSEPLTITVRGEAYMSRQSFKAINEARQENGETEFANPRNAAAGTLRQLDTSVVAKRQLATFLYQEASPTARNQQNEVLAELADLGFSVNPYYQLTSSMDEIWDFIKTIEAKRDQLAYDIDGVVIKVNSLAMQEELGFTVKAPRWAIAYKFPAEEKEAEILSVDWTVGRTGVVTPTANLTPVQLAGTTVSRATLHNVDYIAEKDIRIGDTVIVYKAGDIIPAVLNVVMSKRNQQEVMLIPKLCPSCGSELVHFEDEVALRCINPLCPSLIQRSLEHFASRDAMNITGLGPAIVEKLFLAGFVHDVADIYQLTKEDFMQLDGIKEKSADKLLAAIEASKSNSAEKLLFGLGIRHIGSKVSRLILEVYGDISALLTAKEEEIARIDGLGSTIAQSLTQYFEQKTAAILVDELKTAGVNMHYSGQKVNSDAALFGLTVVLTGKLNQLNRNEAKDKLEALGAKVTGSVSKKTDLVIAGSDAGSKLEKAKSLGIRIEDEDWLRKL</sequence>
<accession>Q8P1L1</accession>